<keyword id="KW-0004">4Fe-4S</keyword>
<keyword id="KW-0997">Cell inner membrane</keyword>
<keyword id="KW-1003">Cell membrane</keyword>
<keyword id="KW-0408">Iron</keyword>
<keyword id="KW-0411">Iron-sulfur</keyword>
<keyword id="KW-0472">Membrane</keyword>
<keyword id="KW-0479">Metal-binding</keyword>
<keyword id="KW-0520">NAD</keyword>
<keyword id="KW-0874">Quinone</keyword>
<keyword id="KW-0677">Repeat</keyword>
<keyword id="KW-1278">Translocase</keyword>
<keyword id="KW-0830">Ubiquinone</keyword>
<name>NUOI_ORITI</name>
<evidence type="ECO:0000255" key="1">
    <source>
        <dbReference type="HAMAP-Rule" id="MF_01351"/>
    </source>
</evidence>
<proteinExistence type="inferred from homology"/>
<organism>
    <name type="scientific">Orientia tsutsugamushi (strain Ikeda)</name>
    <name type="common">Rickettsia tsutsugamushi</name>
    <dbReference type="NCBI Taxonomy" id="334380"/>
    <lineage>
        <taxon>Bacteria</taxon>
        <taxon>Pseudomonadati</taxon>
        <taxon>Pseudomonadota</taxon>
        <taxon>Alphaproteobacteria</taxon>
        <taxon>Rickettsiales</taxon>
        <taxon>Rickettsiaceae</taxon>
        <taxon>Rickettsieae</taxon>
        <taxon>Orientia</taxon>
    </lineage>
</organism>
<comment type="function">
    <text evidence="1">NDH-1 shuttles electrons from NADH, via FMN and iron-sulfur (Fe-S) centers, to quinones in the respiratory chain. The immediate electron acceptor for the enzyme in this species is believed to be ubiquinone. Couples the redox reaction to proton translocation (for every two electrons transferred, four hydrogen ions are translocated across the cytoplasmic membrane), and thus conserves the redox energy in a proton gradient.</text>
</comment>
<comment type="catalytic activity">
    <reaction evidence="1">
        <text>a quinone + NADH + 5 H(+)(in) = a quinol + NAD(+) + 4 H(+)(out)</text>
        <dbReference type="Rhea" id="RHEA:57888"/>
        <dbReference type="ChEBI" id="CHEBI:15378"/>
        <dbReference type="ChEBI" id="CHEBI:24646"/>
        <dbReference type="ChEBI" id="CHEBI:57540"/>
        <dbReference type="ChEBI" id="CHEBI:57945"/>
        <dbReference type="ChEBI" id="CHEBI:132124"/>
    </reaction>
</comment>
<comment type="cofactor">
    <cofactor evidence="1">
        <name>[4Fe-4S] cluster</name>
        <dbReference type="ChEBI" id="CHEBI:49883"/>
    </cofactor>
    <text evidence="1">Binds 2 [4Fe-4S] clusters per subunit.</text>
</comment>
<comment type="subunit">
    <text evidence="1">NDH-1 is composed of 14 different subunits. Subunits NuoA, H, J, K, L, M, N constitute the membrane sector of the complex.</text>
</comment>
<comment type="subcellular location">
    <subcellularLocation>
        <location evidence="1">Cell inner membrane</location>
        <topology evidence="1">Peripheral membrane protein</topology>
    </subcellularLocation>
</comment>
<comment type="similarity">
    <text evidence="1">Belongs to the complex I 23 kDa subunit family.</text>
</comment>
<feature type="chain" id="PRO_1000143659" description="NADH-quinone oxidoreductase subunit I">
    <location>
        <begin position="1"/>
        <end position="161"/>
    </location>
</feature>
<feature type="domain" description="4Fe-4S ferredoxin-type 1" evidence="1">
    <location>
        <begin position="52"/>
        <end position="82"/>
    </location>
</feature>
<feature type="domain" description="4Fe-4S ferredoxin-type 2" evidence="1">
    <location>
        <begin position="92"/>
        <end position="121"/>
    </location>
</feature>
<feature type="binding site" evidence="1">
    <location>
        <position position="62"/>
    </location>
    <ligand>
        <name>[4Fe-4S] cluster</name>
        <dbReference type="ChEBI" id="CHEBI:49883"/>
        <label>1</label>
    </ligand>
</feature>
<feature type="binding site" evidence="1">
    <location>
        <position position="65"/>
    </location>
    <ligand>
        <name>[4Fe-4S] cluster</name>
        <dbReference type="ChEBI" id="CHEBI:49883"/>
        <label>1</label>
    </ligand>
</feature>
<feature type="binding site" evidence="1">
    <location>
        <position position="68"/>
    </location>
    <ligand>
        <name>[4Fe-4S] cluster</name>
        <dbReference type="ChEBI" id="CHEBI:49883"/>
        <label>1</label>
    </ligand>
</feature>
<feature type="binding site" evidence="1">
    <location>
        <position position="72"/>
    </location>
    <ligand>
        <name>[4Fe-4S] cluster</name>
        <dbReference type="ChEBI" id="CHEBI:49883"/>
        <label>2</label>
    </ligand>
</feature>
<feature type="binding site" evidence="1">
    <location>
        <position position="101"/>
    </location>
    <ligand>
        <name>[4Fe-4S] cluster</name>
        <dbReference type="ChEBI" id="CHEBI:49883"/>
        <label>2</label>
    </ligand>
</feature>
<feature type="binding site" evidence="1">
    <location>
        <position position="104"/>
    </location>
    <ligand>
        <name>[4Fe-4S] cluster</name>
        <dbReference type="ChEBI" id="CHEBI:49883"/>
        <label>2</label>
    </ligand>
</feature>
<feature type="binding site" evidence="1">
    <location>
        <position position="107"/>
    </location>
    <ligand>
        <name>[4Fe-4S] cluster</name>
        <dbReference type="ChEBI" id="CHEBI:49883"/>
        <label>2</label>
    </ligand>
</feature>
<feature type="binding site" evidence="1">
    <location>
        <position position="111"/>
    </location>
    <ligand>
        <name>[4Fe-4S] cluster</name>
        <dbReference type="ChEBI" id="CHEBI:49883"/>
        <label>1</label>
    </ligand>
</feature>
<accession>B3CUK1</accession>
<protein>
    <recommendedName>
        <fullName evidence="1">NADH-quinone oxidoreductase subunit I</fullName>
        <ecNumber evidence="1">7.1.1.-</ecNumber>
    </recommendedName>
    <alternativeName>
        <fullName evidence="1">NADH dehydrogenase I subunit I</fullName>
    </alternativeName>
    <alternativeName>
        <fullName evidence="1">NDH-1 subunit I</fullName>
    </alternativeName>
</protein>
<reference key="1">
    <citation type="journal article" date="2008" name="DNA Res.">
        <title>The whole-genome sequencing of the obligate intracellular bacterium Orientia tsutsugamushi revealed massive gene amplification during reductive genome evolution.</title>
        <authorList>
            <person name="Nakayama K."/>
            <person name="Yamashita A."/>
            <person name="Kurokawa K."/>
            <person name="Morimoto T."/>
            <person name="Ogawa M."/>
            <person name="Fukuhara M."/>
            <person name="Urakami H."/>
            <person name="Ohnishi M."/>
            <person name="Uchiyama I."/>
            <person name="Ogura Y."/>
            <person name="Ooka T."/>
            <person name="Oshima K."/>
            <person name="Tamura A."/>
            <person name="Hattori M."/>
            <person name="Hayashi T."/>
        </authorList>
    </citation>
    <scope>NUCLEOTIDE SEQUENCE [LARGE SCALE GENOMIC DNA]</scope>
    <source>
        <strain>Ikeda</strain>
    </source>
</reference>
<gene>
    <name evidence="1" type="primary">nuoI</name>
    <name type="ordered locus">OTT_1590</name>
</gene>
<dbReference type="EC" id="7.1.1.-" evidence="1"/>
<dbReference type="EMBL" id="AP008981">
    <property type="protein sequence ID" value="BAG41048.1"/>
    <property type="molecule type" value="Genomic_DNA"/>
</dbReference>
<dbReference type="SMR" id="B3CUK1"/>
<dbReference type="KEGG" id="ott:OTT_1590"/>
<dbReference type="HOGENOM" id="CLU_067218_5_1_5"/>
<dbReference type="Proteomes" id="UP000001033">
    <property type="component" value="Chromosome"/>
</dbReference>
<dbReference type="GO" id="GO:0005886">
    <property type="term" value="C:plasma membrane"/>
    <property type="evidence" value="ECO:0007669"/>
    <property type="project" value="UniProtKB-SubCell"/>
</dbReference>
<dbReference type="GO" id="GO:0051539">
    <property type="term" value="F:4 iron, 4 sulfur cluster binding"/>
    <property type="evidence" value="ECO:0007669"/>
    <property type="project" value="UniProtKB-KW"/>
</dbReference>
<dbReference type="GO" id="GO:0005506">
    <property type="term" value="F:iron ion binding"/>
    <property type="evidence" value="ECO:0007669"/>
    <property type="project" value="UniProtKB-UniRule"/>
</dbReference>
<dbReference type="GO" id="GO:0050136">
    <property type="term" value="F:NADH:ubiquinone reductase (non-electrogenic) activity"/>
    <property type="evidence" value="ECO:0007669"/>
    <property type="project" value="UniProtKB-UniRule"/>
</dbReference>
<dbReference type="GO" id="GO:0048038">
    <property type="term" value="F:quinone binding"/>
    <property type="evidence" value="ECO:0007669"/>
    <property type="project" value="UniProtKB-KW"/>
</dbReference>
<dbReference type="GO" id="GO:0009060">
    <property type="term" value="P:aerobic respiration"/>
    <property type="evidence" value="ECO:0007669"/>
    <property type="project" value="TreeGrafter"/>
</dbReference>
<dbReference type="FunFam" id="3.30.70.3270:FF:000001">
    <property type="entry name" value="NADH-quinone oxidoreductase subunit I 1"/>
    <property type="match status" value="1"/>
</dbReference>
<dbReference type="Gene3D" id="3.30.70.3270">
    <property type="match status" value="1"/>
</dbReference>
<dbReference type="HAMAP" id="MF_01351">
    <property type="entry name" value="NDH1_NuoI"/>
    <property type="match status" value="1"/>
</dbReference>
<dbReference type="InterPro" id="IPR017896">
    <property type="entry name" value="4Fe4S_Fe-S-bd"/>
</dbReference>
<dbReference type="InterPro" id="IPR017900">
    <property type="entry name" value="4Fe4S_Fe_S_CS"/>
</dbReference>
<dbReference type="InterPro" id="IPR010226">
    <property type="entry name" value="NADH_quinone_OxRdtase_chainI"/>
</dbReference>
<dbReference type="NCBIfam" id="TIGR01971">
    <property type="entry name" value="NuoI"/>
    <property type="match status" value="1"/>
</dbReference>
<dbReference type="NCBIfam" id="NF004538">
    <property type="entry name" value="PRK05888.1-4"/>
    <property type="match status" value="1"/>
</dbReference>
<dbReference type="NCBIfam" id="NF004539">
    <property type="entry name" value="PRK05888.1-5"/>
    <property type="match status" value="1"/>
</dbReference>
<dbReference type="PANTHER" id="PTHR10849:SF20">
    <property type="entry name" value="NADH DEHYDROGENASE [UBIQUINONE] IRON-SULFUR PROTEIN 8, MITOCHONDRIAL"/>
    <property type="match status" value="1"/>
</dbReference>
<dbReference type="PANTHER" id="PTHR10849">
    <property type="entry name" value="NADH DEHYDROGENASE UBIQUINONE IRON-SULFUR PROTEIN 8, MITOCHONDRIAL"/>
    <property type="match status" value="1"/>
</dbReference>
<dbReference type="Pfam" id="PF12838">
    <property type="entry name" value="Fer4_7"/>
    <property type="match status" value="1"/>
</dbReference>
<dbReference type="SUPFAM" id="SSF54862">
    <property type="entry name" value="4Fe-4S ferredoxins"/>
    <property type="match status" value="1"/>
</dbReference>
<dbReference type="PROSITE" id="PS00198">
    <property type="entry name" value="4FE4S_FER_1"/>
    <property type="match status" value="2"/>
</dbReference>
<dbReference type="PROSITE" id="PS51379">
    <property type="entry name" value="4FE4S_FER_2"/>
    <property type="match status" value="2"/>
</dbReference>
<sequence length="161" mass="18641">MKITNFTKSFLLYEIIVGMFLTLKYFFKSKVTIRYPNEVSKLSPRFKGEHALRRYPDGEERCIACKLCEAICPAQAITIEAKEQPNGSRRTTKYDIDMTKCIYCGLCQEACPVDAIVEGPNLEFATETHQELLYNKEKLLRNGDMWEHVIAKNLKVDSIYR</sequence>